<name>KDPA_SHISS</name>
<feature type="chain" id="PRO_1000022245" description="Potassium-transporting ATPase potassium-binding subunit">
    <location>
        <begin position="1"/>
        <end position="557"/>
    </location>
</feature>
<feature type="transmembrane region" description="Helical" evidence="1">
    <location>
        <begin position="5"/>
        <end position="25"/>
    </location>
</feature>
<feature type="transmembrane region" description="Helical" evidence="1">
    <location>
        <begin position="63"/>
        <end position="83"/>
    </location>
</feature>
<feature type="transmembrane region" description="Helical" evidence="1">
    <location>
        <begin position="132"/>
        <end position="152"/>
    </location>
</feature>
<feature type="transmembrane region" description="Helical" evidence="1">
    <location>
        <begin position="170"/>
        <end position="190"/>
    </location>
</feature>
<feature type="transmembrane region" description="Helical" evidence="1">
    <location>
        <begin position="253"/>
        <end position="273"/>
    </location>
</feature>
<feature type="transmembrane region" description="Helical" evidence="1">
    <location>
        <begin position="283"/>
        <end position="303"/>
    </location>
</feature>
<feature type="transmembrane region" description="Helical" evidence="1">
    <location>
        <begin position="329"/>
        <end position="349"/>
    </location>
</feature>
<feature type="transmembrane region" description="Helical" evidence="1">
    <location>
        <begin position="356"/>
        <end position="376"/>
    </location>
</feature>
<feature type="transmembrane region" description="Helical" evidence="1">
    <location>
        <begin position="379"/>
        <end position="399"/>
    </location>
</feature>
<feature type="transmembrane region" description="Helical" evidence="1">
    <location>
        <begin position="416"/>
        <end position="436"/>
    </location>
</feature>
<feature type="transmembrane region" description="Helical" evidence="1">
    <location>
        <begin position="484"/>
        <end position="504"/>
    </location>
</feature>
<feature type="transmembrane region" description="Helical" evidence="1">
    <location>
        <begin position="526"/>
        <end position="546"/>
    </location>
</feature>
<accession>Q3Z4A5</accession>
<organism>
    <name type="scientific">Shigella sonnei (strain Ss046)</name>
    <dbReference type="NCBI Taxonomy" id="300269"/>
    <lineage>
        <taxon>Bacteria</taxon>
        <taxon>Pseudomonadati</taxon>
        <taxon>Pseudomonadota</taxon>
        <taxon>Gammaproteobacteria</taxon>
        <taxon>Enterobacterales</taxon>
        <taxon>Enterobacteriaceae</taxon>
        <taxon>Shigella</taxon>
    </lineage>
</organism>
<protein>
    <recommendedName>
        <fullName evidence="1">Potassium-transporting ATPase potassium-binding subunit</fullName>
    </recommendedName>
    <alternativeName>
        <fullName evidence="1">ATP phosphohydrolase [potassium-transporting] A chain</fullName>
    </alternativeName>
    <alternativeName>
        <fullName evidence="1">Potassium-binding and translocating subunit A</fullName>
    </alternativeName>
    <alternativeName>
        <fullName evidence="1">Potassium-translocating ATPase A chain</fullName>
    </alternativeName>
</protein>
<gene>
    <name evidence="1" type="primary">kdpA</name>
    <name type="ordered locus">SSON_0649</name>
</gene>
<proteinExistence type="inferred from homology"/>
<reference key="1">
    <citation type="journal article" date="2005" name="Nucleic Acids Res.">
        <title>Genome dynamics and diversity of Shigella species, the etiologic agents of bacillary dysentery.</title>
        <authorList>
            <person name="Yang F."/>
            <person name="Yang J."/>
            <person name="Zhang X."/>
            <person name="Chen L."/>
            <person name="Jiang Y."/>
            <person name="Yan Y."/>
            <person name="Tang X."/>
            <person name="Wang J."/>
            <person name="Xiong Z."/>
            <person name="Dong J."/>
            <person name="Xue Y."/>
            <person name="Zhu Y."/>
            <person name="Xu X."/>
            <person name="Sun L."/>
            <person name="Chen S."/>
            <person name="Nie H."/>
            <person name="Peng J."/>
            <person name="Xu J."/>
            <person name="Wang Y."/>
            <person name="Yuan Z."/>
            <person name="Wen Y."/>
            <person name="Yao Z."/>
            <person name="Shen Y."/>
            <person name="Qiang B."/>
            <person name="Hou Y."/>
            <person name="Yu J."/>
            <person name="Jin Q."/>
        </authorList>
    </citation>
    <scope>NUCLEOTIDE SEQUENCE [LARGE SCALE GENOMIC DNA]</scope>
    <source>
        <strain>Ss046</strain>
    </source>
</reference>
<comment type="function">
    <text evidence="1">Part of the high-affinity ATP-driven potassium transport (or Kdp) system, which catalyzes the hydrolysis of ATP coupled with the electrogenic transport of potassium into the cytoplasm. This subunit binds the periplasmic potassium ions and delivers the ions to the membrane domain of KdpB through an intramembrane tunnel.</text>
</comment>
<comment type="subunit">
    <text evidence="1">The system is composed of three essential subunits: KdpA, KdpB and KdpC.</text>
</comment>
<comment type="subcellular location">
    <subcellularLocation>
        <location evidence="1">Cell inner membrane</location>
        <topology evidence="1">Multi-pass membrane protein</topology>
    </subcellularLocation>
</comment>
<comment type="similarity">
    <text evidence="1">Belongs to the KdpA family.</text>
</comment>
<sequence>MAAQGFLLIATFLLVLMVLARPLGSGLARLINDIPLPGTAGVERILFRLPGVSDHEMNWKQYLCAILGLNMLGLAVLFFMLLGQHYLPLNPQQLPGLSWDLALNTAVSFVTNTNWQSYSGETTLSYFSQMAGLTVQNFLSAASGIAVIFAFIRAFTRQSMSTLGNAWVDLLRITLWVLVPVALLIALFFIQQGALQNFLPYQAVNTVEGAQQLLPMGPVASQEAIKMLGTNGGGFFNANSSHPFENPTALTNFVQMLAIFLIPTALCFAFGEVTGDRRQGRMLLWAMSVIFVICVGVVMWAEVQGNPHLLALGADSSINMEGKESRFGVLVSSLFAVVTTAASCGAVIAMHDSFTALGGMVPMWLMQIGEVVFGGVGSGLYGMMLFVLLAVFIAGLMIGRTPEYLGKKIDVREMKLTALAILVTPTLVLMGAALAMMTDAGRSAMLNPGPHGFSEVLYAVSSAANNNGSAFAGLSANSPFWNCLLAFCMFVGRFGVIIPVMAIAGSLVSKKSQPASSGTLPTHGPLFVGLLIGTVLLVGALTFIPALALGPVAEYLS</sequence>
<evidence type="ECO:0000255" key="1">
    <source>
        <dbReference type="HAMAP-Rule" id="MF_00275"/>
    </source>
</evidence>
<dbReference type="EMBL" id="CP000038">
    <property type="protein sequence ID" value="AAZ87407.1"/>
    <property type="molecule type" value="Genomic_DNA"/>
</dbReference>
<dbReference type="RefSeq" id="WP_000730106.1">
    <property type="nucleotide sequence ID" value="NC_007384.1"/>
</dbReference>
<dbReference type="SMR" id="Q3Z4A5"/>
<dbReference type="KEGG" id="ssn:SSON_0649"/>
<dbReference type="HOGENOM" id="CLU_018614_3_0_6"/>
<dbReference type="Proteomes" id="UP000002529">
    <property type="component" value="Chromosome"/>
</dbReference>
<dbReference type="GO" id="GO:0005886">
    <property type="term" value="C:plasma membrane"/>
    <property type="evidence" value="ECO:0007669"/>
    <property type="project" value="UniProtKB-SubCell"/>
</dbReference>
<dbReference type="GO" id="GO:0008556">
    <property type="term" value="F:P-type potassium transmembrane transporter activity"/>
    <property type="evidence" value="ECO:0007669"/>
    <property type="project" value="InterPro"/>
</dbReference>
<dbReference type="GO" id="GO:0030955">
    <property type="term" value="F:potassium ion binding"/>
    <property type="evidence" value="ECO:0007669"/>
    <property type="project" value="UniProtKB-UniRule"/>
</dbReference>
<dbReference type="HAMAP" id="MF_00275">
    <property type="entry name" value="KdpA"/>
    <property type="match status" value="1"/>
</dbReference>
<dbReference type="InterPro" id="IPR004623">
    <property type="entry name" value="KdpA"/>
</dbReference>
<dbReference type="NCBIfam" id="TIGR00680">
    <property type="entry name" value="kdpA"/>
    <property type="match status" value="1"/>
</dbReference>
<dbReference type="PANTHER" id="PTHR30607">
    <property type="entry name" value="POTASSIUM-TRANSPORTING ATPASE A CHAIN"/>
    <property type="match status" value="1"/>
</dbReference>
<dbReference type="PANTHER" id="PTHR30607:SF2">
    <property type="entry name" value="POTASSIUM-TRANSPORTING ATPASE POTASSIUM-BINDING SUBUNIT"/>
    <property type="match status" value="1"/>
</dbReference>
<dbReference type="Pfam" id="PF03814">
    <property type="entry name" value="KdpA"/>
    <property type="match status" value="1"/>
</dbReference>
<dbReference type="PIRSF" id="PIRSF001294">
    <property type="entry name" value="K_ATPaseA"/>
    <property type="match status" value="1"/>
</dbReference>
<keyword id="KW-0997">Cell inner membrane</keyword>
<keyword id="KW-1003">Cell membrane</keyword>
<keyword id="KW-0406">Ion transport</keyword>
<keyword id="KW-0472">Membrane</keyword>
<keyword id="KW-0630">Potassium</keyword>
<keyword id="KW-0633">Potassium transport</keyword>
<keyword id="KW-1185">Reference proteome</keyword>
<keyword id="KW-0812">Transmembrane</keyword>
<keyword id="KW-1133">Transmembrane helix</keyword>
<keyword id="KW-0813">Transport</keyword>